<proteinExistence type="evidence at protein level"/>
<evidence type="ECO:0000250" key="1"/>
<evidence type="ECO:0000305" key="2"/>
<evidence type="ECO:0000305" key="3">
    <source>
    </source>
</evidence>
<protein>
    <recommendedName>
        <fullName>Profilin-8</fullName>
    </recommendedName>
    <alternativeName>
        <fullName>Pollen allergen Ole e 2</fullName>
    </alternativeName>
    <allergenName>Ole e 2</allergenName>
</protein>
<sequence length="131" mass="14145">MSWQAYVDEHLMCEIEGHHLASAAILGHDGTVWAQSADFPQFKPEEITGIMKDFDEPGHLAPTGMFVATAKYMVIQGEPGAVIRGKKGAGGITIKKTGQALVVGIYDEPMTPGQCNMVVERLGDYLVKQGL</sequence>
<keyword id="KW-0009">Actin-binding</keyword>
<keyword id="KW-0020">Allergen</keyword>
<keyword id="KW-0963">Cytoplasm</keyword>
<keyword id="KW-0206">Cytoskeleton</keyword>
<keyword id="KW-1015">Disulfide bond</keyword>
<keyword id="KW-0597">Phosphoprotein</keyword>
<reference key="1">
    <citation type="journal article" date="2012" name="PLoS ONE">
        <title>Characterization of profilin polymorphism in pollen with a focus on multifunctionality.</title>
        <authorList>
            <person name="Jimenez-Lopez J.C."/>
            <person name="Morales S."/>
            <person name="Castro A.J."/>
            <person name="Volkmann D."/>
            <person name="Rodriguez-Garcia M.I."/>
            <person name="Alche Jde D."/>
        </authorList>
    </citation>
    <scope>NUCLEOTIDE SEQUENCE [MRNA]</scope>
    <scope>POLYMORPHISM</scope>
    <source>
        <strain>cv. Picual</strain>
    </source>
</reference>
<reference key="2">
    <citation type="journal article" date="2013" name="PLoS ONE">
        <title>Analysis of the effects of polymorphism on pollen profilin structural functionality and the generation of conformational, T- and B-cell epitopes.</title>
        <authorList>
            <person name="Jimenez-Lopez J.C."/>
            <person name="Rodriguez-Garcia M.I."/>
            <person name="Alche J.D."/>
        </authorList>
    </citation>
    <scope>3D-STRUCTURE MODELING</scope>
    <scope>DISULFIDE BOND</scope>
</reference>
<feature type="initiator methionine" description="Removed" evidence="1">
    <location>
        <position position="1"/>
    </location>
</feature>
<feature type="chain" id="PRO_0000425056" description="Profilin-8">
    <location>
        <begin position="2"/>
        <end position="131"/>
    </location>
</feature>
<feature type="short sequence motif" description="Involved in PIP2 interaction">
    <location>
        <begin position="81"/>
        <end position="97"/>
    </location>
</feature>
<feature type="modified residue" description="Phosphothreonine" evidence="1">
    <location>
        <position position="111"/>
    </location>
</feature>
<feature type="disulfide bond" evidence="3">
    <location>
        <begin position="13"/>
        <end position="115"/>
    </location>
</feature>
<organism>
    <name type="scientific">Olea europaea</name>
    <name type="common">Common olive</name>
    <dbReference type="NCBI Taxonomy" id="4146"/>
    <lineage>
        <taxon>Eukaryota</taxon>
        <taxon>Viridiplantae</taxon>
        <taxon>Streptophyta</taxon>
        <taxon>Embryophyta</taxon>
        <taxon>Tracheophyta</taxon>
        <taxon>Spermatophyta</taxon>
        <taxon>Magnoliopsida</taxon>
        <taxon>eudicotyledons</taxon>
        <taxon>Gunneridae</taxon>
        <taxon>Pentapetalae</taxon>
        <taxon>asterids</taxon>
        <taxon>lamiids</taxon>
        <taxon>Lamiales</taxon>
        <taxon>Oleaceae</taxon>
        <taxon>Oleeae</taxon>
        <taxon>Olea</taxon>
    </lineage>
</organism>
<dbReference type="EMBL" id="DQ663557">
    <property type="protein sequence ID" value="ABG81310.1"/>
    <property type="molecule type" value="mRNA"/>
</dbReference>
<dbReference type="SMR" id="A4KA53"/>
<dbReference type="Allergome" id="490">
    <property type="allergen name" value="Ole e 2"/>
</dbReference>
<dbReference type="GO" id="GO:0005938">
    <property type="term" value="C:cell cortex"/>
    <property type="evidence" value="ECO:0007669"/>
    <property type="project" value="TreeGrafter"/>
</dbReference>
<dbReference type="GO" id="GO:0005856">
    <property type="term" value="C:cytoskeleton"/>
    <property type="evidence" value="ECO:0007669"/>
    <property type="project" value="UniProtKB-SubCell"/>
</dbReference>
<dbReference type="GO" id="GO:0003785">
    <property type="term" value="F:actin monomer binding"/>
    <property type="evidence" value="ECO:0007669"/>
    <property type="project" value="TreeGrafter"/>
</dbReference>
<dbReference type="CDD" id="cd00148">
    <property type="entry name" value="PROF"/>
    <property type="match status" value="1"/>
</dbReference>
<dbReference type="FunFam" id="3.30.450.30:FF:000001">
    <property type="entry name" value="Profilin"/>
    <property type="match status" value="1"/>
</dbReference>
<dbReference type="Gene3D" id="3.30.450.30">
    <property type="entry name" value="Dynein light chain 2a, cytoplasmic"/>
    <property type="match status" value="1"/>
</dbReference>
<dbReference type="InterPro" id="IPR048278">
    <property type="entry name" value="PFN"/>
</dbReference>
<dbReference type="InterPro" id="IPR005455">
    <property type="entry name" value="PFN_euk"/>
</dbReference>
<dbReference type="InterPro" id="IPR036140">
    <property type="entry name" value="PFN_sf"/>
</dbReference>
<dbReference type="InterPro" id="IPR027310">
    <property type="entry name" value="Profilin_CS"/>
</dbReference>
<dbReference type="PANTHER" id="PTHR11604">
    <property type="entry name" value="PROFILIN"/>
    <property type="match status" value="1"/>
</dbReference>
<dbReference type="PANTHER" id="PTHR11604:SF31">
    <property type="entry name" value="PROFILIN"/>
    <property type="match status" value="1"/>
</dbReference>
<dbReference type="Pfam" id="PF00235">
    <property type="entry name" value="Profilin"/>
    <property type="match status" value="1"/>
</dbReference>
<dbReference type="PRINTS" id="PR00392">
    <property type="entry name" value="PROFILIN"/>
</dbReference>
<dbReference type="PRINTS" id="PR01640">
    <property type="entry name" value="PROFILINPLNT"/>
</dbReference>
<dbReference type="SMART" id="SM00392">
    <property type="entry name" value="PROF"/>
    <property type="match status" value="1"/>
</dbReference>
<dbReference type="SUPFAM" id="SSF55770">
    <property type="entry name" value="Profilin (actin-binding protein)"/>
    <property type="match status" value="1"/>
</dbReference>
<dbReference type="PROSITE" id="PS00414">
    <property type="entry name" value="PROFILIN"/>
    <property type="match status" value="1"/>
</dbReference>
<accession>A4KA53</accession>
<name>PROCM_OLEEU</name>
<comment type="function">
    <text evidence="1">Binds to actin and affects the structure of the cytoskeleton. At high concentrations, profilin prevents the polymerization of actin, whereas it enhances it at low concentrations (By similarity).</text>
</comment>
<comment type="subunit">
    <text evidence="1">Occurs in many kinds of cells as a complex with monomeric actin in a 1:1 ratio.</text>
</comment>
<comment type="subcellular location">
    <subcellularLocation>
        <location evidence="1">Cytoplasm</location>
        <location evidence="1">Cytoskeleton</location>
    </subcellularLocation>
</comment>
<comment type="PTM">
    <text evidence="1">Phosphorylated by MAP kinases.</text>
</comment>
<comment type="polymorphism">
    <text>Several isoforms of the allergen exist due to polymorphism.</text>
</comment>
<comment type="allergen">
    <text>Causes an allergic reaction in human.</text>
</comment>
<comment type="miscellaneous">
    <text evidence="3">The variability of the residues taking part of IgE-binding epitopes might be responsible of the difference in cross-reactivity among olive pollen cultivars, and between distantly related pollen species, leading to a variable range of allergy reactions among atopic patients.</text>
</comment>
<comment type="similarity">
    <text evidence="2">Belongs to the profilin family.</text>
</comment>